<organism>
    <name type="scientific">Sus scrofa</name>
    <name type="common">Pig</name>
    <dbReference type="NCBI Taxonomy" id="9823"/>
    <lineage>
        <taxon>Eukaryota</taxon>
        <taxon>Metazoa</taxon>
        <taxon>Chordata</taxon>
        <taxon>Craniata</taxon>
        <taxon>Vertebrata</taxon>
        <taxon>Euteleostomi</taxon>
        <taxon>Mammalia</taxon>
        <taxon>Eutheria</taxon>
        <taxon>Laurasiatheria</taxon>
        <taxon>Artiodactyla</taxon>
        <taxon>Suina</taxon>
        <taxon>Suidae</taxon>
        <taxon>Sus</taxon>
    </lineage>
</organism>
<name>OBRG_PIG</name>
<gene>
    <name type="primary">LEPROT</name>
    <name type="synonym">LEPR</name>
    <name type="synonym">OBR</name>
</gene>
<dbReference type="EMBL" id="AB529857">
    <property type="protein sequence ID" value="BAI48028.1"/>
    <property type="status" value="ALT_FRAME"/>
    <property type="molecule type" value="mRNA"/>
</dbReference>
<dbReference type="EMBL" id="EU189935">
    <property type="protein sequence ID" value="ABZ03971.1"/>
    <property type="molecule type" value="mRNA"/>
</dbReference>
<dbReference type="RefSeq" id="NP_001138860.1">
    <property type="nucleotide sequence ID" value="NM_001145388.1"/>
</dbReference>
<dbReference type="FunCoup" id="B9TRX0">
    <property type="interactions" value="1145"/>
</dbReference>
<dbReference type="STRING" id="9823.ENSSSCP00000062516"/>
<dbReference type="PaxDb" id="9823-ENSSSCP00000004117"/>
<dbReference type="PeptideAtlas" id="B9TRX0"/>
<dbReference type="Ensembl" id="ENSSSCT00000071603.2">
    <property type="protein sequence ID" value="ENSSSCP00000062516.2"/>
    <property type="gene ID" value="ENSSSCG00000003806.5"/>
</dbReference>
<dbReference type="Ensembl" id="ENSSSCT00035074765.1">
    <property type="protein sequence ID" value="ENSSSCP00035030364.1"/>
    <property type="gene ID" value="ENSSSCG00035056016.1"/>
</dbReference>
<dbReference type="Ensembl" id="ENSSSCT00065053913.1">
    <property type="protein sequence ID" value="ENSSSCP00065023447.1"/>
    <property type="gene ID" value="ENSSSCG00065039432.1"/>
</dbReference>
<dbReference type="Ensembl" id="ENSSSCT00115022345">
    <property type="protein sequence ID" value="ENSSSCP00115021169"/>
    <property type="gene ID" value="ENSSSCG00115012928"/>
</dbReference>
<dbReference type="GeneID" id="100270821"/>
<dbReference type="KEGG" id="ssc:100270821"/>
<dbReference type="CTD" id="54741"/>
<dbReference type="VGNC" id="VGNC:89686">
    <property type="gene designation" value="LEPROT"/>
</dbReference>
<dbReference type="eggNOG" id="KOG2174">
    <property type="taxonomic scope" value="Eukaryota"/>
</dbReference>
<dbReference type="GeneTree" id="ENSGT00390000006503"/>
<dbReference type="InParanoid" id="B9TRX0"/>
<dbReference type="OMA" id="RSHVDMT"/>
<dbReference type="OrthoDB" id="14246at2759"/>
<dbReference type="Proteomes" id="UP000008227">
    <property type="component" value="Chromosome 6"/>
</dbReference>
<dbReference type="Proteomes" id="UP000314985">
    <property type="component" value="Unplaced"/>
</dbReference>
<dbReference type="Proteomes" id="UP000694570">
    <property type="component" value="Unplaced"/>
</dbReference>
<dbReference type="Proteomes" id="UP000694571">
    <property type="component" value="Unplaced"/>
</dbReference>
<dbReference type="Proteomes" id="UP000694720">
    <property type="component" value="Unplaced"/>
</dbReference>
<dbReference type="Proteomes" id="UP000694722">
    <property type="component" value="Unplaced"/>
</dbReference>
<dbReference type="Proteomes" id="UP000694723">
    <property type="component" value="Unplaced"/>
</dbReference>
<dbReference type="Proteomes" id="UP000694724">
    <property type="component" value="Unplaced"/>
</dbReference>
<dbReference type="Proteomes" id="UP000694725">
    <property type="component" value="Unplaced"/>
</dbReference>
<dbReference type="Proteomes" id="UP000694726">
    <property type="component" value="Unplaced"/>
</dbReference>
<dbReference type="Proteomes" id="UP000694727">
    <property type="component" value="Unplaced"/>
</dbReference>
<dbReference type="Proteomes" id="UP000694728">
    <property type="component" value="Unplaced"/>
</dbReference>
<dbReference type="GO" id="GO:0010008">
    <property type="term" value="C:endosome membrane"/>
    <property type="evidence" value="ECO:0007669"/>
    <property type="project" value="UniProtKB-SubCell"/>
</dbReference>
<dbReference type="GO" id="GO:0000139">
    <property type="term" value="C:Golgi membrane"/>
    <property type="evidence" value="ECO:0007669"/>
    <property type="project" value="UniProtKB-SubCell"/>
</dbReference>
<dbReference type="GO" id="GO:0005102">
    <property type="term" value="F:signaling receptor binding"/>
    <property type="evidence" value="ECO:0007669"/>
    <property type="project" value="Ensembl"/>
</dbReference>
<dbReference type="GO" id="GO:0060400">
    <property type="term" value="P:negative regulation of growth hormone receptor signaling pathway"/>
    <property type="evidence" value="ECO:0007669"/>
    <property type="project" value="Ensembl"/>
</dbReference>
<dbReference type="GO" id="GO:2000009">
    <property type="term" value="P:negative regulation of protein localization to cell surface"/>
    <property type="evidence" value="ECO:0007669"/>
    <property type="project" value="Ensembl"/>
</dbReference>
<dbReference type="GO" id="GO:0046426">
    <property type="term" value="P:negative regulation of receptor signaling pathway via JAK-STAT"/>
    <property type="evidence" value="ECO:0007669"/>
    <property type="project" value="Ensembl"/>
</dbReference>
<dbReference type="InterPro" id="IPR007262">
    <property type="entry name" value="Vps55/LEPROT"/>
</dbReference>
<dbReference type="PANTHER" id="PTHR12050:SF3">
    <property type="entry name" value="LEPTIN RECEPTOR GENE-RELATED PROTEIN"/>
    <property type="match status" value="1"/>
</dbReference>
<dbReference type="PANTHER" id="PTHR12050">
    <property type="entry name" value="LEPTIN RECEPTOR-RELATED"/>
    <property type="match status" value="1"/>
</dbReference>
<dbReference type="Pfam" id="PF04133">
    <property type="entry name" value="Vps55"/>
    <property type="match status" value="1"/>
</dbReference>
<comment type="function">
    <text evidence="1">Negatively regulates leptin receptor (LEPR) cell surface expression, and thus decreases response to leptin/LEP. Negatively regulates growth hormone (GH) receptor cell surface expression in liver. May play a role in liver resistance to GH during periods of reduced nutrient availability (By similarity).</text>
</comment>
<comment type="subunit">
    <text evidence="1">Interacts with LEPR. Interacts with RAB13 (By similarity).</text>
</comment>
<comment type="subcellular location">
    <subcellularLocation>
        <location evidence="1">Golgi apparatus membrane</location>
        <topology evidence="1">Multi-pass membrane protein</topology>
    </subcellularLocation>
    <subcellularLocation>
        <location evidence="1">Endosome membrane</location>
    </subcellularLocation>
</comment>
<comment type="similarity">
    <text evidence="3">Belongs to the OB-RGRP/VPS55 family.</text>
</comment>
<comment type="sequence caution" evidence="3">
    <conflict type="frameshift">
        <sequence resource="EMBL-CDS" id="BAI48028"/>
    </conflict>
</comment>
<evidence type="ECO:0000250" key="1"/>
<evidence type="ECO:0000255" key="2"/>
<evidence type="ECO:0000305" key="3"/>
<proteinExistence type="evidence at transcript level"/>
<feature type="chain" id="PRO_0000397879" description="Leptin receptor gene-related protein">
    <location>
        <begin position="1"/>
        <end position="131"/>
    </location>
</feature>
<feature type="transmembrane region" description="Helical" evidence="2">
    <location>
        <begin position="7"/>
        <end position="27"/>
    </location>
</feature>
<feature type="transmembrane region" description="Helical" evidence="2">
    <location>
        <begin position="32"/>
        <end position="52"/>
    </location>
</feature>
<feature type="transmembrane region" description="Helical" evidence="2">
    <location>
        <begin position="69"/>
        <end position="89"/>
    </location>
</feature>
<feature type="transmembrane region" description="Helical" evidence="2">
    <location>
        <begin position="100"/>
        <end position="120"/>
    </location>
</feature>
<sequence>MAGVKALVALSFSGAIGLTFLMLGCALEDYGVYWPLFVLVFHALSPIPHFIAKRATYDSDATSSACRELAYFFTTGIVVSAFGFPVILARVAVIKWGACGLVLAGNAVIFLTIQGFFLVFGRGDDFSWEQW</sequence>
<reference key="1">
    <citation type="submission" date="2009-10" db="EMBL/GenBank/DDBJ databases">
        <title>Cloning of porcine genes involved in fat metabolism.</title>
        <authorList>
            <person name="Matsumoto T."/>
            <person name="Okumura N."/>
            <person name="Uenishi H."/>
            <person name="Hamasima N."/>
        </authorList>
    </citation>
    <scope>NUCLEOTIDE SEQUENCE [MRNA]</scope>
    <source>
        <strain>Landrace</strain>
    </source>
</reference>
<reference key="2">
    <citation type="submission" date="2007-10" db="EMBL/GenBank/DDBJ databases">
        <title>Construction of a radiation hybrid map on pig chromosome 6.</title>
        <authorList>
            <person name="Kim J.H."/>
            <person name="Jeon J.T."/>
        </authorList>
    </citation>
    <scope>NUCLEOTIDE SEQUENCE [LARGE SCALE MRNA]</scope>
</reference>
<protein>
    <recommendedName>
        <fullName>Leptin receptor gene-related protein</fullName>
    </recommendedName>
    <alternativeName>
        <fullName>Endospanin-1</fullName>
    </alternativeName>
    <alternativeName>
        <fullName>OB-R gene-related protein</fullName>
        <shortName>OB-RGRP</shortName>
    </alternativeName>
</protein>
<keyword id="KW-0967">Endosome</keyword>
<keyword id="KW-0333">Golgi apparatus</keyword>
<keyword id="KW-0472">Membrane</keyword>
<keyword id="KW-1185">Reference proteome</keyword>
<keyword id="KW-0812">Transmembrane</keyword>
<keyword id="KW-1133">Transmembrane helix</keyword>
<accession>B9TRX0</accession>
<accession>D0G775</accession>